<comment type="subcellular location">
    <subcellularLocation>
        <location>Secreted</location>
    </subcellularLocation>
    <text>Secreted via type III secretion system (T3SS).</text>
</comment>
<comment type="PTM">
    <text evidence="1">Phosphorylated.</text>
</comment>
<comment type="similarity">
    <text evidence="2">Belongs to the NopP family.</text>
</comment>
<dbReference type="EMBL" id="U00090">
    <property type="protein sequence ID" value="AAB91955.1"/>
    <property type="molecule type" value="Genomic_DNA"/>
</dbReference>
<dbReference type="RefSeq" id="NP_444168.1">
    <property type="nucleotide sequence ID" value="NC_000914.2"/>
</dbReference>
<dbReference type="RefSeq" id="WP_010875098.1">
    <property type="nucleotide sequence ID" value="NC_000914.2"/>
</dbReference>
<dbReference type="KEGG" id="rhi:NGR_a00570"/>
<dbReference type="eggNOG" id="ENOG5033TQY">
    <property type="taxonomic scope" value="Bacteria"/>
</dbReference>
<dbReference type="HOGENOM" id="CLU_1136333_0_0_5"/>
<dbReference type="OrthoDB" id="9804669at2"/>
<dbReference type="Proteomes" id="UP000001054">
    <property type="component" value="Plasmid pNGR234a"/>
</dbReference>
<dbReference type="GO" id="GO:0005576">
    <property type="term" value="C:extracellular region"/>
    <property type="evidence" value="ECO:0007669"/>
    <property type="project" value="UniProtKB-SubCell"/>
</dbReference>
<accession>P55724</accession>
<reference key="1">
    <citation type="journal article" date="1997" name="Nature">
        <title>Molecular basis of symbiosis between Rhizobium and legumes.</title>
        <authorList>
            <person name="Freiberg C.A."/>
            <person name="Fellay R."/>
            <person name="Bairoch A."/>
            <person name="Broughton W.J."/>
            <person name="Rosenthal A."/>
            <person name="Perret X."/>
        </authorList>
    </citation>
    <scope>NUCLEOTIDE SEQUENCE [LARGE SCALE GENOMIC DNA]</scope>
    <source>
        <strain>NBRC 101917 / NGR234</strain>
    </source>
</reference>
<reference key="2">
    <citation type="journal article" date="2009" name="Appl. Environ. Microbiol.">
        <title>Rhizobium sp. strain NGR234 possesses a remarkable number of secretion systems.</title>
        <authorList>
            <person name="Schmeisser C."/>
            <person name="Liesegang H."/>
            <person name="Krysciak D."/>
            <person name="Bakkou N."/>
            <person name="Le Quere A."/>
            <person name="Wollherr A."/>
            <person name="Heinemeyer I."/>
            <person name="Morgenstern B."/>
            <person name="Pommerening-Roeser A."/>
            <person name="Flores M."/>
            <person name="Palacios R."/>
            <person name="Brenner S."/>
            <person name="Gottschalk G."/>
            <person name="Schmitz R.A."/>
            <person name="Broughton W.J."/>
            <person name="Perret X."/>
            <person name="Strittmatter A.W."/>
            <person name="Streit W.R."/>
        </authorList>
    </citation>
    <scope>NUCLEOTIDE SEQUENCE [LARGE SCALE GENOMIC DNA]</scope>
    <source>
        <strain>NBRC 101917 / NGR234</strain>
    </source>
</reference>
<reference key="3">
    <citation type="journal article" date="2004" name="J. Bacteriol.">
        <title>Characterization of NopP, a type III secreted effector of Rhizobium sp. strain NGR234.</title>
        <authorList>
            <person name="Ausmees N."/>
            <person name="Kobayashi H."/>
            <person name="Deakin W.J."/>
            <person name="Marie C."/>
            <person name="Krishnan H.B."/>
            <person name="Broughton W.J."/>
            <person name="Perret X."/>
        </authorList>
    </citation>
    <scope>CHARACTERIZATION</scope>
</reference>
<reference key="4">
    <citation type="journal article" date="2005" name="Mol. Microbiol.">
        <title>NopP, a phosphorylated effector of Rhizobium sp. strain NGR234, is a major determinant of nodulation of the tropical legumes Flemingia congesta and Tephrosia vogelii.</title>
        <authorList>
            <person name="Skorpil P."/>
            <person name="Saad M.M."/>
            <person name="Boukli N.M."/>
            <person name="Kobayashi H."/>
            <person name="Ares-Orpel F."/>
            <person name="Broughton W.J."/>
            <person name="Deakin W.J."/>
        </authorList>
    </citation>
    <scope>PHOSPHORYLATION</scope>
</reference>
<proteinExistence type="evidence at protein level"/>
<gene>
    <name type="primary">nopP</name>
    <name type="ordered locus">NGR_a00570</name>
    <name type="ORF">y4yP</name>
</gene>
<evidence type="ECO:0000269" key="1">
    <source>
    </source>
</evidence>
<evidence type="ECO:0000305" key="2"/>
<protein>
    <recommendedName>
        <fullName>Effector protein NopP</fullName>
    </recommendedName>
    <alternativeName>
        <fullName>Nodulation outer protein P</fullName>
    </alternativeName>
</protein>
<geneLocation type="plasmid">
    <name>sym pNGR234a</name>
</geneLocation>
<feature type="chain" id="PRO_0000096953" description="Effector protein NopP">
    <location>
        <begin position="1"/>
        <end position="271"/>
    </location>
</feature>
<organism>
    <name type="scientific">Sinorhizobium fredii (strain NBRC 101917 / NGR234)</name>
    <dbReference type="NCBI Taxonomy" id="394"/>
    <lineage>
        <taxon>Bacteria</taxon>
        <taxon>Pseudomonadati</taxon>
        <taxon>Pseudomonadota</taxon>
        <taxon>Alphaproteobacteria</taxon>
        <taxon>Hyphomicrobiales</taxon>
        <taxon>Rhizobiaceae</taxon>
        <taxon>Sinorhizobium/Ensifer group</taxon>
        <taxon>Sinorhizobium</taxon>
    </lineage>
</organism>
<name>NOPP_SINFN</name>
<keyword id="KW-0536">Nodulation</keyword>
<keyword id="KW-0597">Phosphoprotein</keyword>
<keyword id="KW-0614">Plasmid</keyword>
<keyword id="KW-1185">Reference proteome</keyword>
<keyword id="KW-0964">Secreted</keyword>
<sequence>MYGRIDSSSDFHYTQSASKQMDAETQEFADTFARMHLDRSNGGSSSAARYTLDHEPPVVPIDLETFRREIRKFHGKEITDIANNPQEYSDFVSAKARRTADVAQQYGIRRDSENARYFSYQLGNQCVGLMRTEGGFSMEEEFESKSWRDQFPGHQEITSTVDLQVAHPLVENAGDILLEHQLRRDGERPLLNWRAENPEAKARAAMMGFVEVDDCDMVLDPKQHPDKWTQTSAAEWRRKDKPPLYLRKFEDAETAQCSTSCSYETYEDDFM</sequence>